<sequence length="91" mass="10237">MARVTVQDAVEKIGNRFDLVLVAARRARQMQVGGKDPLVPEENDKTTVIALREIEEGLINNQILDVRERQEQQEQEAAELQAVTAIAEGRR</sequence>
<protein>
    <recommendedName>
        <fullName evidence="1">DNA-directed RNA polymerase subunit omega</fullName>
        <shortName evidence="1">RNAP omega subunit</shortName>
        <ecNumber evidence="1">2.7.7.6</ecNumber>
    </recommendedName>
    <alternativeName>
        <fullName evidence="1">RNA polymerase omega subunit</fullName>
    </alternativeName>
    <alternativeName>
        <fullName evidence="1">Transcriptase subunit omega</fullName>
    </alternativeName>
</protein>
<accession>B7LVL1</accession>
<name>RPOZ_ESCF3</name>
<proteinExistence type="inferred from homology"/>
<keyword id="KW-0240">DNA-directed RNA polymerase</keyword>
<keyword id="KW-0548">Nucleotidyltransferase</keyword>
<keyword id="KW-0804">Transcription</keyword>
<keyword id="KW-0808">Transferase</keyword>
<reference key="1">
    <citation type="journal article" date="2009" name="PLoS Genet.">
        <title>Organised genome dynamics in the Escherichia coli species results in highly diverse adaptive paths.</title>
        <authorList>
            <person name="Touchon M."/>
            <person name="Hoede C."/>
            <person name="Tenaillon O."/>
            <person name="Barbe V."/>
            <person name="Baeriswyl S."/>
            <person name="Bidet P."/>
            <person name="Bingen E."/>
            <person name="Bonacorsi S."/>
            <person name="Bouchier C."/>
            <person name="Bouvet O."/>
            <person name="Calteau A."/>
            <person name="Chiapello H."/>
            <person name="Clermont O."/>
            <person name="Cruveiller S."/>
            <person name="Danchin A."/>
            <person name="Diard M."/>
            <person name="Dossat C."/>
            <person name="Karoui M.E."/>
            <person name="Frapy E."/>
            <person name="Garry L."/>
            <person name="Ghigo J.M."/>
            <person name="Gilles A.M."/>
            <person name="Johnson J."/>
            <person name="Le Bouguenec C."/>
            <person name="Lescat M."/>
            <person name="Mangenot S."/>
            <person name="Martinez-Jehanne V."/>
            <person name="Matic I."/>
            <person name="Nassif X."/>
            <person name="Oztas S."/>
            <person name="Petit M.A."/>
            <person name="Pichon C."/>
            <person name="Rouy Z."/>
            <person name="Ruf C.S."/>
            <person name="Schneider D."/>
            <person name="Tourret J."/>
            <person name="Vacherie B."/>
            <person name="Vallenet D."/>
            <person name="Medigue C."/>
            <person name="Rocha E.P.C."/>
            <person name="Denamur E."/>
        </authorList>
    </citation>
    <scope>NUCLEOTIDE SEQUENCE [LARGE SCALE GENOMIC DNA]</scope>
    <source>
        <strain>ATCC 35469 / DSM 13698 / BCRC 15582 / CCUG 18766 / IAM 14443 / JCM 21226 / LMG 7866 / NBRC 102419 / NCTC 12128 / CDC 0568-73</strain>
    </source>
</reference>
<evidence type="ECO:0000255" key="1">
    <source>
        <dbReference type="HAMAP-Rule" id="MF_00366"/>
    </source>
</evidence>
<organism>
    <name type="scientific">Escherichia fergusonii (strain ATCC 35469 / DSM 13698 / CCUG 18766 / IAM 14443 / JCM 21226 / LMG 7866 / NBRC 102419 / NCTC 12128 / CDC 0568-73)</name>
    <dbReference type="NCBI Taxonomy" id="585054"/>
    <lineage>
        <taxon>Bacteria</taxon>
        <taxon>Pseudomonadati</taxon>
        <taxon>Pseudomonadota</taxon>
        <taxon>Gammaproteobacteria</taxon>
        <taxon>Enterobacterales</taxon>
        <taxon>Enterobacteriaceae</taxon>
        <taxon>Escherichia</taxon>
    </lineage>
</organism>
<comment type="function">
    <text evidence="1">Promotes RNA polymerase assembly. Latches the N- and C-terminal regions of the beta' subunit thereby facilitating its interaction with the beta and alpha subunits.</text>
</comment>
<comment type="catalytic activity">
    <reaction evidence="1">
        <text>RNA(n) + a ribonucleoside 5'-triphosphate = RNA(n+1) + diphosphate</text>
        <dbReference type="Rhea" id="RHEA:21248"/>
        <dbReference type="Rhea" id="RHEA-COMP:14527"/>
        <dbReference type="Rhea" id="RHEA-COMP:17342"/>
        <dbReference type="ChEBI" id="CHEBI:33019"/>
        <dbReference type="ChEBI" id="CHEBI:61557"/>
        <dbReference type="ChEBI" id="CHEBI:140395"/>
        <dbReference type="EC" id="2.7.7.6"/>
    </reaction>
</comment>
<comment type="subunit">
    <text evidence="1">The RNAP catalytic core consists of 2 alpha, 1 beta, 1 beta' and 1 omega subunit. When a sigma factor is associated with the core the holoenzyme is formed, which can initiate transcription.</text>
</comment>
<comment type="similarity">
    <text evidence="1">Belongs to the RNA polymerase subunit omega family.</text>
</comment>
<gene>
    <name evidence="1" type="primary">rpoZ</name>
    <name type="ordered locus">EFER_3941</name>
</gene>
<dbReference type="EC" id="2.7.7.6" evidence="1"/>
<dbReference type="EMBL" id="CU928158">
    <property type="protein sequence ID" value="CAQ91375.1"/>
    <property type="molecule type" value="Genomic_DNA"/>
</dbReference>
<dbReference type="RefSeq" id="WP_000135058.1">
    <property type="nucleotide sequence ID" value="NC_011740.1"/>
</dbReference>
<dbReference type="SMR" id="B7LVL1"/>
<dbReference type="GeneID" id="98390719"/>
<dbReference type="KEGG" id="efe:EFER_3941"/>
<dbReference type="HOGENOM" id="CLU_125406_5_3_6"/>
<dbReference type="OrthoDB" id="9796300at2"/>
<dbReference type="Proteomes" id="UP000000745">
    <property type="component" value="Chromosome"/>
</dbReference>
<dbReference type="GO" id="GO:0000428">
    <property type="term" value="C:DNA-directed RNA polymerase complex"/>
    <property type="evidence" value="ECO:0007669"/>
    <property type="project" value="UniProtKB-KW"/>
</dbReference>
<dbReference type="GO" id="GO:0003677">
    <property type="term" value="F:DNA binding"/>
    <property type="evidence" value="ECO:0007669"/>
    <property type="project" value="UniProtKB-UniRule"/>
</dbReference>
<dbReference type="GO" id="GO:0003899">
    <property type="term" value="F:DNA-directed RNA polymerase activity"/>
    <property type="evidence" value="ECO:0007669"/>
    <property type="project" value="UniProtKB-UniRule"/>
</dbReference>
<dbReference type="GO" id="GO:0006351">
    <property type="term" value="P:DNA-templated transcription"/>
    <property type="evidence" value="ECO:0007669"/>
    <property type="project" value="UniProtKB-UniRule"/>
</dbReference>
<dbReference type="FunFam" id="3.90.940.10:FF:000001">
    <property type="entry name" value="DNA-directed RNA polymerase subunit omega"/>
    <property type="match status" value="1"/>
</dbReference>
<dbReference type="Gene3D" id="3.90.940.10">
    <property type="match status" value="1"/>
</dbReference>
<dbReference type="HAMAP" id="MF_00366">
    <property type="entry name" value="RNApol_bact_RpoZ"/>
    <property type="match status" value="1"/>
</dbReference>
<dbReference type="InterPro" id="IPR003716">
    <property type="entry name" value="DNA-dir_RNA_pol_omega"/>
</dbReference>
<dbReference type="InterPro" id="IPR006110">
    <property type="entry name" value="Pol_omega/Rpo6/RPB6"/>
</dbReference>
<dbReference type="InterPro" id="IPR036161">
    <property type="entry name" value="RPB6/omega-like_sf"/>
</dbReference>
<dbReference type="NCBIfam" id="TIGR00690">
    <property type="entry name" value="rpoZ"/>
    <property type="match status" value="1"/>
</dbReference>
<dbReference type="PANTHER" id="PTHR34476">
    <property type="entry name" value="DNA-DIRECTED RNA POLYMERASE SUBUNIT OMEGA"/>
    <property type="match status" value="1"/>
</dbReference>
<dbReference type="PANTHER" id="PTHR34476:SF1">
    <property type="entry name" value="DNA-DIRECTED RNA POLYMERASE SUBUNIT OMEGA"/>
    <property type="match status" value="1"/>
</dbReference>
<dbReference type="Pfam" id="PF01192">
    <property type="entry name" value="RNA_pol_Rpb6"/>
    <property type="match status" value="1"/>
</dbReference>
<dbReference type="SMART" id="SM01409">
    <property type="entry name" value="RNA_pol_Rpb6"/>
    <property type="match status" value="1"/>
</dbReference>
<dbReference type="SUPFAM" id="SSF63562">
    <property type="entry name" value="RPB6/omega subunit-like"/>
    <property type="match status" value="1"/>
</dbReference>
<feature type="chain" id="PRO_1000121224" description="DNA-directed RNA polymerase subunit omega">
    <location>
        <begin position="1"/>
        <end position="91"/>
    </location>
</feature>